<protein>
    <recommendedName>
        <fullName evidence="1">Replication factor C small subunit</fullName>
        <shortName evidence="1">RFC small subunit</shortName>
    </recommendedName>
    <alternativeName>
        <fullName evidence="1">Clamp loader small subunit</fullName>
    </alternativeName>
</protein>
<proteinExistence type="inferred from homology"/>
<keyword id="KW-0067">ATP-binding</keyword>
<keyword id="KW-0235">DNA replication</keyword>
<keyword id="KW-0547">Nucleotide-binding</keyword>
<organism>
    <name type="scientific">Thermoplasma volcanium (strain ATCC 51530 / DSM 4299 / JCM 9571 / NBRC 15438 / GSS1)</name>
    <dbReference type="NCBI Taxonomy" id="273116"/>
    <lineage>
        <taxon>Archaea</taxon>
        <taxon>Methanobacteriati</taxon>
        <taxon>Thermoplasmatota</taxon>
        <taxon>Thermoplasmata</taxon>
        <taxon>Thermoplasmatales</taxon>
        <taxon>Thermoplasmataceae</taxon>
        <taxon>Thermoplasma</taxon>
    </lineage>
</organism>
<evidence type="ECO:0000255" key="1">
    <source>
        <dbReference type="HAMAP-Rule" id="MF_01509"/>
    </source>
</evidence>
<evidence type="ECO:0000305" key="2"/>
<reference key="1">
    <citation type="journal article" date="2000" name="Proc. Natl. Acad. Sci. U.S.A.">
        <title>Archaeal adaptation to higher temperatures revealed by genomic sequence of Thermoplasma volcanium.</title>
        <authorList>
            <person name="Kawashima T."/>
            <person name="Amano N."/>
            <person name="Koike H."/>
            <person name="Makino S."/>
            <person name="Higuchi S."/>
            <person name="Kawashima-Ohya Y."/>
            <person name="Watanabe K."/>
            <person name="Yamazaki M."/>
            <person name="Kanehori K."/>
            <person name="Kawamoto T."/>
            <person name="Nunoshiba T."/>
            <person name="Yamamoto Y."/>
            <person name="Aramaki H."/>
            <person name="Makino K."/>
            <person name="Suzuki M."/>
        </authorList>
    </citation>
    <scope>NUCLEOTIDE SEQUENCE [LARGE SCALE GENOMIC DNA]</scope>
    <source>
        <strain>ATCC 51530 / DSM 4299 / JCM 9571 / NBRC 15438 / GSS1</strain>
    </source>
</reference>
<feature type="chain" id="PRO_0000135987" description="Replication factor C small subunit">
    <location>
        <begin position="1"/>
        <end position="318"/>
    </location>
</feature>
<feature type="binding site" evidence="1">
    <location>
        <begin position="43"/>
        <end position="50"/>
    </location>
    <ligand>
        <name>ATP</name>
        <dbReference type="ChEBI" id="CHEBI:30616"/>
    </ligand>
</feature>
<gene>
    <name evidence="1" type="primary">rfcS</name>
    <name type="ordered locus">TV1518</name>
    <name type="ORF">TVG1570739</name>
</gene>
<dbReference type="EMBL" id="BA000011">
    <property type="protein sequence ID" value="BAB60660.1"/>
    <property type="status" value="ALT_INIT"/>
    <property type="molecule type" value="Genomic_DNA"/>
</dbReference>
<dbReference type="RefSeq" id="WP_010917747.1">
    <property type="nucleotide sequence ID" value="NC_002689.2"/>
</dbReference>
<dbReference type="SMR" id="Q977Z9"/>
<dbReference type="STRING" id="273116.gene:9382333"/>
<dbReference type="PaxDb" id="273116-14325757"/>
<dbReference type="GeneID" id="1442207"/>
<dbReference type="KEGG" id="tvo:TVG1570739"/>
<dbReference type="eggNOG" id="arCOG00469">
    <property type="taxonomic scope" value="Archaea"/>
</dbReference>
<dbReference type="HOGENOM" id="CLU_042324_2_1_2"/>
<dbReference type="OrthoDB" id="7928at2157"/>
<dbReference type="PhylomeDB" id="Q977Z9"/>
<dbReference type="Proteomes" id="UP000001017">
    <property type="component" value="Chromosome"/>
</dbReference>
<dbReference type="GO" id="GO:0005663">
    <property type="term" value="C:DNA replication factor C complex"/>
    <property type="evidence" value="ECO:0007669"/>
    <property type="project" value="InterPro"/>
</dbReference>
<dbReference type="GO" id="GO:0005524">
    <property type="term" value="F:ATP binding"/>
    <property type="evidence" value="ECO:0007669"/>
    <property type="project" value="UniProtKB-UniRule"/>
</dbReference>
<dbReference type="GO" id="GO:0016887">
    <property type="term" value="F:ATP hydrolysis activity"/>
    <property type="evidence" value="ECO:0007669"/>
    <property type="project" value="InterPro"/>
</dbReference>
<dbReference type="GO" id="GO:0003677">
    <property type="term" value="F:DNA binding"/>
    <property type="evidence" value="ECO:0007669"/>
    <property type="project" value="InterPro"/>
</dbReference>
<dbReference type="GO" id="GO:0003689">
    <property type="term" value="F:DNA clamp loader activity"/>
    <property type="evidence" value="ECO:0007669"/>
    <property type="project" value="UniProtKB-UniRule"/>
</dbReference>
<dbReference type="GO" id="GO:0006281">
    <property type="term" value="P:DNA repair"/>
    <property type="evidence" value="ECO:0007669"/>
    <property type="project" value="TreeGrafter"/>
</dbReference>
<dbReference type="GO" id="GO:0006261">
    <property type="term" value="P:DNA-templated DNA replication"/>
    <property type="evidence" value="ECO:0007669"/>
    <property type="project" value="TreeGrafter"/>
</dbReference>
<dbReference type="CDD" id="cd00009">
    <property type="entry name" value="AAA"/>
    <property type="match status" value="1"/>
</dbReference>
<dbReference type="CDD" id="cd18140">
    <property type="entry name" value="HLD_clamp_RFC"/>
    <property type="match status" value="1"/>
</dbReference>
<dbReference type="FunFam" id="3.40.50.300:FF:000952">
    <property type="entry name" value="Replication factor C subunit 2"/>
    <property type="match status" value="1"/>
</dbReference>
<dbReference type="Gene3D" id="1.10.8.60">
    <property type="match status" value="1"/>
</dbReference>
<dbReference type="Gene3D" id="1.20.272.10">
    <property type="match status" value="1"/>
</dbReference>
<dbReference type="Gene3D" id="3.40.50.300">
    <property type="entry name" value="P-loop containing nucleotide triphosphate hydrolases"/>
    <property type="match status" value="1"/>
</dbReference>
<dbReference type="HAMAP" id="MF_01509">
    <property type="entry name" value="RfcS"/>
    <property type="match status" value="1"/>
</dbReference>
<dbReference type="InterPro" id="IPR003593">
    <property type="entry name" value="AAA+_ATPase"/>
</dbReference>
<dbReference type="InterPro" id="IPR003959">
    <property type="entry name" value="ATPase_AAA_core"/>
</dbReference>
<dbReference type="InterPro" id="IPR008921">
    <property type="entry name" value="DNA_pol3_clamp-load_cplx_C"/>
</dbReference>
<dbReference type="InterPro" id="IPR050238">
    <property type="entry name" value="DNA_Rep/Repair_Clamp_Loader"/>
</dbReference>
<dbReference type="InterPro" id="IPR027417">
    <property type="entry name" value="P-loop_NTPase"/>
</dbReference>
<dbReference type="InterPro" id="IPR023748">
    <property type="entry name" value="Rep_factor-C_ssu_arc"/>
</dbReference>
<dbReference type="InterPro" id="IPR013748">
    <property type="entry name" value="Rep_factorC_C"/>
</dbReference>
<dbReference type="InterPro" id="IPR047854">
    <property type="entry name" value="RFC_lid"/>
</dbReference>
<dbReference type="NCBIfam" id="NF001679">
    <property type="entry name" value="PRK00440.1"/>
    <property type="match status" value="1"/>
</dbReference>
<dbReference type="PANTHER" id="PTHR11669">
    <property type="entry name" value="REPLICATION FACTOR C / DNA POLYMERASE III GAMMA-TAU SUBUNIT"/>
    <property type="match status" value="1"/>
</dbReference>
<dbReference type="PANTHER" id="PTHR11669:SF20">
    <property type="entry name" value="REPLICATION FACTOR C SUBUNIT 4"/>
    <property type="match status" value="1"/>
</dbReference>
<dbReference type="Pfam" id="PF00004">
    <property type="entry name" value="AAA"/>
    <property type="match status" value="1"/>
</dbReference>
<dbReference type="Pfam" id="PF21960">
    <property type="entry name" value="RCF1-5-like_lid"/>
    <property type="match status" value="1"/>
</dbReference>
<dbReference type="Pfam" id="PF08542">
    <property type="entry name" value="Rep_fac_C"/>
    <property type="match status" value="1"/>
</dbReference>
<dbReference type="SMART" id="SM00382">
    <property type="entry name" value="AAA"/>
    <property type="match status" value="1"/>
</dbReference>
<dbReference type="SUPFAM" id="SSF52540">
    <property type="entry name" value="P-loop containing nucleoside triphosphate hydrolases"/>
    <property type="match status" value="1"/>
</dbReference>
<dbReference type="SUPFAM" id="SSF48019">
    <property type="entry name" value="post-AAA+ oligomerization domain-like"/>
    <property type="match status" value="1"/>
</dbReference>
<sequence length="318" mass="35666">MIEIWTEKYRPKSLSEIYGEDENIQKLKSFVEKKELPHLLFAGSVGTGKTSTAIALAIELFGESWKENFIEMNASNENGIDVIRNKIKDIARIRPSNPLGFKILFLDEADQLTAEAQAALRRTMEMYSETTRFVFACNYSSKIIPPIQSRTVVMRFRPVQDEFIKKKLNEIAKNEGFTIDDESMEAMVEVSGGDMRKAINVLQAVYTSGEISPKKIYEIIGYASPESVNKLISRAINGLFDEARQIVDKMMIEDGLSGIDIVKSVHSIVRASVVPPKQKIEIIKALADAEFRIVEGSNDRIQLDALIARIADIGSKIN</sequence>
<name>RFCS_THEVO</name>
<accession>Q977Z9</accession>
<comment type="function">
    <text evidence="1">Part of the RFC clamp loader complex which loads the PCNA sliding clamp onto DNA.</text>
</comment>
<comment type="subunit">
    <text evidence="1">Heteromultimer composed of small subunits (RfcS) and large subunits (RfcL).</text>
</comment>
<comment type="similarity">
    <text evidence="1">Belongs to the activator 1 small subunits family. RfcS subfamily.</text>
</comment>
<comment type="sequence caution" evidence="2">
    <conflict type="erroneous initiation">
        <sequence resource="EMBL-CDS" id="BAB60660"/>
    </conflict>
</comment>